<proteinExistence type="inferred from homology"/>
<sequence>MTKQVEIFTDGSCLGNPGPGGYGAILRYKQHEKTFSAGYYLTTNNRMELMAAIVALEALTSPCEVTLSTDSQYVRQGITQWIHNWKKRGWKTADRKPVRNVDLWQRLDLAIQSHTIQWEWVKGHAGHPENERCDELARQGANSPTLDDTGYNPD</sequence>
<evidence type="ECO:0000255" key="1">
    <source>
        <dbReference type="HAMAP-Rule" id="MF_00042"/>
    </source>
</evidence>
<evidence type="ECO:0000255" key="2">
    <source>
        <dbReference type="PROSITE-ProRule" id="PRU00408"/>
    </source>
</evidence>
<comment type="function">
    <text evidence="1">Endonuclease that specifically degrades the RNA of RNA-DNA hybrids.</text>
</comment>
<comment type="catalytic activity">
    <reaction evidence="1">
        <text>Endonucleolytic cleavage to 5'-phosphomonoester.</text>
        <dbReference type="EC" id="3.1.26.4"/>
    </reaction>
</comment>
<comment type="cofactor">
    <cofactor evidence="1">
        <name>Mg(2+)</name>
        <dbReference type="ChEBI" id="CHEBI:18420"/>
    </cofactor>
    <text evidence="1">Binds 1 Mg(2+) ion per subunit. May bind a second metal ion at a regulatory site, or after substrate binding.</text>
</comment>
<comment type="subunit">
    <text evidence="1">Monomer.</text>
</comment>
<comment type="subcellular location">
    <subcellularLocation>
        <location evidence="1">Cytoplasm</location>
    </subcellularLocation>
</comment>
<comment type="similarity">
    <text evidence="1">Belongs to the RNase H family.</text>
</comment>
<gene>
    <name evidence="1" type="primary">rnhA</name>
    <name type="ordered locus">YPK_1108</name>
</gene>
<organism>
    <name type="scientific">Yersinia pseudotuberculosis serotype O:3 (strain YPIII)</name>
    <dbReference type="NCBI Taxonomy" id="502800"/>
    <lineage>
        <taxon>Bacteria</taxon>
        <taxon>Pseudomonadati</taxon>
        <taxon>Pseudomonadota</taxon>
        <taxon>Gammaproteobacteria</taxon>
        <taxon>Enterobacterales</taxon>
        <taxon>Yersiniaceae</taxon>
        <taxon>Yersinia</taxon>
    </lineage>
</organism>
<accession>B1JR46</accession>
<keyword id="KW-0963">Cytoplasm</keyword>
<keyword id="KW-0255">Endonuclease</keyword>
<keyword id="KW-0378">Hydrolase</keyword>
<keyword id="KW-0460">Magnesium</keyword>
<keyword id="KW-0479">Metal-binding</keyword>
<keyword id="KW-0540">Nuclease</keyword>
<protein>
    <recommendedName>
        <fullName evidence="1">Ribonuclease H</fullName>
        <shortName evidence="1">RNase H</shortName>
        <ecNumber evidence="1">3.1.26.4</ecNumber>
    </recommendedName>
</protein>
<dbReference type="EC" id="3.1.26.4" evidence="1"/>
<dbReference type="EMBL" id="CP000950">
    <property type="protein sequence ID" value="ACA67406.1"/>
    <property type="molecule type" value="Genomic_DNA"/>
</dbReference>
<dbReference type="RefSeq" id="WP_002210699.1">
    <property type="nucleotide sequence ID" value="NZ_CP009792.1"/>
</dbReference>
<dbReference type="SMR" id="B1JR46"/>
<dbReference type="GeneID" id="57977475"/>
<dbReference type="KEGG" id="ypy:YPK_1108"/>
<dbReference type="PATRIC" id="fig|502800.11.peg.1738"/>
<dbReference type="GO" id="GO:0005737">
    <property type="term" value="C:cytoplasm"/>
    <property type="evidence" value="ECO:0007669"/>
    <property type="project" value="UniProtKB-SubCell"/>
</dbReference>
<dbReference type="GO" id="GO:0000287">
    <property type="term" value="F:magnesium ion binding"/>
    <property type="evidence" value="ECO:0007669"/>
    <property type="project" value="UniProtKB-UniRule"/>
</dbReference>
<dbReference type="GO" id="GO:0003676">
    <property type="term" value="F:nucleic acid binding"/>
    <property type="evidence" value="ECO:0007669"/>
    <property type="project" value="InterPro"/>
</dbReference>
<dbReference type="GO" id="GO:0004523">
    <property type="term" value="F:RNA-DNA hybrid ribonuclease activity"/>
    <property type="evidence" value="ECO:0007669"/>
    <property type="project" value="UniProtKB-UniRule"/>
</dbReference>
<dbReference type="GO" id="GO:0043137">
    <property type="term" value="P:DNA replication, removal of RNA primer"/>
    <property type="evidence" value="ECO:0007669"/>
    <property type="project" value="TreeGrafter"/>
</dbReference>
<dbReference type="CDD" id="cd09278">
    <property type="entry name" value="RNase_HI_prokaryote_like"/>
    <property type="match status" value="1"/>
</dbReference>
<dbReference type="FunFam" id="3.30.420.10:FF:000008">
    <property type="entry name" value="Ribonuclease H"/>
    <property type="match status" value="1"/>
</dbReference>
<dbReference type="Gene3D" id="3.30.420.10">
    <property type="entry name" value="Ribonuclease H-like superfamily/Ribonuclease H"/>
    <property type="match status" value="1"/>
</dbReference>
<dbReference type="HAMAP" id="MF_00042">
    <property type="entry name" value="RNase_H"/>
    <property type="match status" value="1"/>
</dbReference>
<dbReference type="InterPro" id="IPR050092">
    <property type="entry name" value="RNase_H"/>
</dbReference>
<dbReference type="InterPro" id="IPR012337">
    <property type="entry name" value="RNaseH-like_sf"/>
</dbReference>
<dbReference type="InterPro" id="IPR002156">
    <property type="entry name" value="RNaseH_domain"/>
</dbReference>
<dbReference type="InterPro" id="IPR036397">
    <property type="entry name" value="RNaseH_sf"/>
</dbReference>
<dbReference type="InterPro" id="IPR022892">
    <property type="entry name" value="RNaseHI"/>
</dbReference>
<dbReference type="NCBIfam" id="NF001236">
    <property type="entry name" value="PRK00203.1"/>
    <property type="match status" value="1"/>
</dbReference>
<dbReference type="PANTHER" id="PTHR10642">
    <property type="entry name" value="RIBONUCLEASE H1"/>
    <property type="match status" value="1"/>
</dbReference>
<dbReference type="PANTHER" id="PTHR10642:SF26">
    <property type="entry name" value="RIBONUCLEASE H1"/>
    <property type="match status" value="1"/>
</dbReference>
<dbReference type="Pfam" id="PF00075">
    <property type="entry name" value="RNase_H"/>
    <property type="match status" value="1"/>
</dbReference>
<dbReference type="SUPFAM" id="SSF53098">
    <property type="entry name" value="Ribonuclease H-like"/>
    <property type="match status" value="1"/>
</dbReference>
<dbReference type="PROSITE" id="PS50879">
    <property type="entry name" value="RNASE_H_1"/>
    <property type="match status" value="1"/>
</dbReference>
<name>RNH_YERPY</name>
<reference key="1">
    <citation type="submission" date="2008-02" db="EMBL/GenBank/DDBJ databases">
        <title>Complete sequence of Yersinia pseudotuberculosis YPIII.</title>
        <authorList>
            <consortium name="US DOE Joint Genome Institute"/>
            <person name="Copeland A."/>
            <person name="Lucas S."/>
            <person name="Lapidus A."/>
            <person name="Glavina del Rio T."/>
            <person name="Dalin E."/>
            <person name="Tice H."/>
            <person name="Bruce D."/>
            <person name="Goodwin L."/>
            <person name="Pitluck S."/>
            <person name="Munk A.C."/>
            <person name="Brettin T."/>
            <person name="Detter J.C."/>
            <person name="Han C."/>
            <person name="Tapia R."/>
            <person name="Schmutz J."/>
            <person name="Larimer F."/>
            <person name="Land M."/>
            <person name="Hauser L."/>
            <person name="Challacombe J.F."/>
            <person name="Green L."/>
            <person name="Lindler L.E."/>
            <person name="Nikolich M.P."/>
            <person name="Richardson P."/>
        </authorList>
    </citation>
    <scope>NUCLEOTIDE SEQUENCE [LARGE SCALE GENOMIC DNA]</scope>
    <source>
        <strain>YPIII</strain>
    </source>
</reference>
<feature type="chain" id="PRO_1000090926" description="Ribonuclease H">
    <location>
        <begin position="1"/>
        <end position="154"/>
    </location>
</feature>
<feature type="domain" description="RNase H type-1" evidence="2">
    <location>
        <begin position="1"/>
        <end position="142"/>
    </location>
</feature>
<feature type="binding site" evidence="1">
    <location>
        <position position="10"/>
    </location>
    <ligand>
        <name>Mg(2+)</name>
        <dbReference type="ChEBI" id="CHEBI:18420"/>
        <label>1</label>
    </ligand>
</feature>
<feature type="binding site" evidence="1">
    <location>
        <position position="10"/>
    </location>
    <ligand>
        <name>Mg(2+)</name>
        <dbReference type="ChEBI" id="CHEBI:18420"/>
        <label>2</label>
    </ligand>
</feature>
<feature type="binding site" evidence="1">
    <location>
        <position position="48"/>
    </location>
    <ligand>
        <name>Mg(2+)</name>
        <dbReference type="ChEBI" id="CHEBI:18420"/>
        <label>1</label>
    </ligand>
</feature>
<feature type="binding site" evidence="1">
    <location>
        <position position="70"/>
    </location>
    <ligand>
        <name>Mg(2+)</name>
        <dbReference type="ChEBI" id="CHEBI:18420"/>
        <label>1</label>
    </ligand>
</feature>
<feature type="binding site" evidence="1">
    <location>
        <position position="134"/>
    </location>
    <ligand>
        <name>Mg(2+)</name>
        <dbReference type="ChEBI" id="CHEBI:18420"/>
        <label>2</label>
    </ligand>
</feature>